<accession>Q9HT70</accession>
<reference key="1">
    <citation type="journal article" date="2000" name="Nature">
        <title>Complete genome sequence of Pseudomonas aeruginosa PAO1, an opportunistic pathogen.</title>
        <authorList>
            <person name="Stover C.K."/>
            <person name="Pham X.-Q.T."/>
            <person name="Erwin A.L."/>
            <person name="Mizoguchi S.D."/>
            <person name="Warrener P."/>
            <person name="Hickey M.J."/>
            <person name="Brinkman F.S.L."/>
            <person name="Hufnagle W.O."/>
            <person name="Kowalik D.J."/>
            <person name="Lagrou M."/>
            <person name="Garber R.L."/>
            <person name="Goltry L."/>
            <person name="Tolentino E."/>
            <person name="Westbrock-Wadman S."/>
            <person name="Yuan Y."/>
            <person name="Brody L.L."/>
            <person name="Coulter S.N."/>
            <person name="Folger K.R."/>
            <person name="Kas A."/>
            <person name="Larbig K."/>
            <person name="Lim R.M."/>
            <person name="Smith K.A."/>
            <person name="Spencer D.H."/>
            <person name="Wong G.K.-S."/>
            <person name="Wu Z."/>
            <person name="Paulsen I.T."/>
            <person name="Reizer J."/>
            <person name="Saier M.H. Jr."/>
            <person name="Hancock R.E.W."/>
            <person name="Lory S."/>
            <person name="Olson M.V."/>
        </authorList>
    </citation>
    <scope>NUCLEOTIDE SEQUENCE [LARGE SCALE GENOMIC DNA]</scope>
    <source>
        <strain>ATCC 15692 / DSM 22644 / CIP 104116 / JCM 14847 / LMG 12228 / 1C / PRS 101 / PAO1</strain>
    </source>
</reference>
<evidence type="ECO:0000255" key="1">
    <source>
        <dbReference type="HAMAP-Rule" id="MF_01719"/>
    </source>
</evidence>
<protein>
    <recommendedName>
        <fullName evidence="1">Methionine import ATP-binding protein MetN 2</fullName>
        <ecNumber evidence="1">7.4.2.11</ecNumber>
    </recommendedName>
</protein>
<keyword id="KW-0029">Amino-acid transport</keyword>
<keyword id="KW-0067">ATP-binding</keyword>
<keyword id="KW-0997">Cell inner membrane</keyword>
<keyword id="KW-1003">Cell membrane</keyword>
<keyword id="KW-0472">Membrane</keyword>
<keyword id="KW-0547">Nucleotide-binding</keyword>
<keyword id="KW-1185">Reference proteome</keyword>
<keyword id="KW-1278">Translocase</keyword>
<keyword id="KW-0813">Transport</keyword>
<feature type="chain" id="PRO_0000270346" description="Methionine import ATP-binding protein MetN 2">
    <location>
        <begin position="1"/>
        <end position="335"/>
    </location>
</feature>
<feature type="domain" description="ABC transporter" evidence="1">
    <location>
        <begin position="2"/>
        <end position="242"/>
    </location>
</feature>
<feature type="binding site" evidence="1">
    <location>
        <begin position="38"/>
        <end position="45"/>
    </location>
    <ligand>
        <name>ATP</name>
        <dbReference type="ChEBI" id="CHEBI:30616"/>
    </ligand>
</feature>
<comment type="function">
    <text evidence="1">Part of the ABC transporter complex MetNIQ involved in methionine import. Responsible for energy coupling to the transport system.</text>
</comment>
<comment type="catalytic activity">
    <reaction evidence="1">
        <text>L-methionine(out) + ATP + H2O = L-methionine(in) + ADP + phosphate + H(+)</text>
        <dbReference type="Rhea" id="RHEA:29779"/>
        <dbReference type="ChEBI" id="CHEBI:15377"/>
        <dbReference type="ChEBI" id="CHEBI:15378"/>
        <dbReference type="ChEBI" id="CHEBI:30616"/>
        <dbReference type="ChEBI" id="CHEBI:43474"/>
        <dbReference type="ChEBI" id="CHEBI:57844"/>
        <dbReference type="ChEBI" id="CHEBI:456216"/>
        <dbReference type="EC" id="7.4.2.11"/>
    </reaction>
</comment>
<comment type="catalytic activity">
    <reaction evidence="1">
        <text>D-methionine(out) + ATP + H2O = D-methionine(in) + ADP + phosphate + H(+)</text>
        <dbReference type="Rhea" id="RHEA:29767"/>
        <dbReference type="ChEBI" id="CHEBI:15377"/>
        <dbReference type="ChEBI" id="CHEBI:15378"/>
        <dbReference type="ChEBI" id="CHEBI:30616"/>
        <dbReference type="ChEBI" id="CHEBI:43474"/>
        <dbReference type="ChEBI" id="CHEBI:57932"/>
        <dbReference type="ChEBI" id="CHEBI:456216"/>
        <dbReference type="EC" id="7.4.2.11"/>
    </reaction>
</comment>
<comment type="subunit">
    <text evidence="1">The complex is composed of two ATP-binding proteins (MetN), two transmembrane proteins (MetI) and a solute-binding protein (MetQ).</text>
</comment>
<comment type="subcellular location">
    <subcellularLocation>
        <location evidence="1">Cell inner membrane</location>
        <topology evidence="1">Peripheral membrane protein</topology>
    </subcellularLocation>
</comment>
<comment type="similarity">
    <text evidence="1">Belongs to the ABC transporter superfamily. Methionine importer (TC 3.A.1.24) family.</text>
</comment>
<gene>
    <name evidence="1" type="primary">metN2</name>
    <name type="ordered locus">PA5503</name>
</gene>
<organism>
    <name type="scientific">Pseudomonas aeruginosa (strain ATCC 15692 / DSM 22644 / CIP 104116 / JCM 14847 / LMG 12228 / 1C / PRS 101 / PAO1)</name>
    <dbReference type="NCBI Taxonomy" id="208964"/>
    <lineage>
        <taxon>Bacteria</taxon>
        <taxon>Pseudomonadati</taxon>
        <taxon>Pseudomonadota</taxon>
        <taxon>Gammaproteobacteria</taxon>
        <taxon>Pseudomonadales</taxon>
        <taxon>Pseudomonadaceae</taxon>
        <taxon>Pseudomonas</taxon>
    </lineage>
</organism>
<dbReference type="EC" id="7.4.2.11" evidence="1"/>
<dbReference type="EMBL" id="AE004091">
    <property type="protein sequence ID" value="AAG08888.1"/>
    <property type="molecule type" value="Genomic_DNA"/>
</dbReference>
<dbReference type="PIR" id="C82957">
    <property type="entry name" value="C82957"/>
</dbReference>
<dbReference type="RefSeq" id="NP_254190.1">
    <property type="nucleotide sequence ID" value="NC_002516.2"/>
</dbReference>
<dbReference type="RefSeq" id="WP_003097002.1">
    <property type="nucleotide sequence ID" value="NZ_QZGE01000012.1"/>
</dbReference>
<dbReference type="SMR" id="Q9HT70"/>
<dbReference type="FunCoup" id="Q9HT70">
    <property type="interactions" value="275"/>
</dbReference>
<dbReference type="STRING" id="208964.PA5503"/>
<dbReference type="TCDB" id="3.A.1.24.5">
    <property type="family name" value="the atp-binding cassette (abc) superfamily"/>
</dbReference>
<dbReference type="PaxDb" id="208964-PA5503"/>
<dbReference type="GeneID" id="877864"/>
<dbReference type="KEGG" id="pae:PA5503"/>
<dbReference type="PATRIC" id="fig|208964.12.peg.5768"/>
<dbReference type="PseudoCAP" id="PA5503"/>
<dbReference type="HOGENOM" id="CLU_000604_1_3_6"/>
<dbReference type="InParanoid" id="Q9HT70"/>
<dbReference type="OrthoDB" id="9802264at2"/>
<dbReference type="PhylomeDB" id="Q9HT70"/>
<dbReference type="BioCyc" id="PAER208964:G1FZ6-5630-MONOMER"/>
<dbReference type="Proteomes" id="UP000002438">
    <property type="component" value="Chromosome"/>
</dbReference>
<dbReference type="GO" id="GO:0005886">
    <property type="term" value="C:plasma membrane"/>
    <property type="evidence" value="ECO:0007669"/>
    <property type="project" value="UniProtKB-SubCell"/>
</dbReference>
<dbReference type="GO" id="GO:0033232">
    <property type="term" value="F:ABC-type D-methionine transporter activity"/>
    <property type="evidence" value="ECO:0007669"/>
    <property type="project" value="UniProtKB-EC"/>
</dbReference>
<dbReference type="GO" id="GO:0005524">
    <property type="term" value="F:ATP binding"/>
    <property type="evidence" value="ECO:0007669"/>
    <property type="project" value="UniProtKB-KW"/>
</dbReference>
<dbReference type="GO" id="GO:0016887">
    <property type="term" value="F:ATP hydrolysis activity"/>
    <property type="evidence" value="ECO:0007669"/>
    <property type="project" value="InterPro"/>
</dbReference>
<dbReference type="CDD" id="cd03258">
    <property type="entry name" value="ABC_MetN_methionine_transporter"/>
    <property type="match status" value="1"/>
</dbReference>
<dbReference type="FunFam" id="3.40.50.300:FF:000056">
    <property type="entry name" value="Cell division ATP-binding protein FtsE"/>
    <property type="match status" value="1"/>
</dbReference>
<dbReference type="Gene3D" id="3.30.70.260">
    <property type="match status" value="1"/>
</dbReference>
<dbReference type="Gene3D" id="3.40.50.300">
    <property type="entry name" value="P-loop containing nucleotide triphosphate hydrolases"/>
    <property type="match status" value="1"/>
</dbReference>
<dbReference type="InterPro" id="IPR003593">
    <property type="entry name" value="AAA+_ATPase"/>
</dbReference>
<dbReference type="InterPro" id="IPR003439">
    <property type="entry name" value="ABC_transporter-like_ATP-bd"/>
</dbReference>
<dbReference type="InterPro" id="IPR017871">
    <property type="entry name" value="ABC_transporter-like_CS"/>
</dbReference>
<dbReference type="InterPro" id="IPR045865">
    <property type="entry name" value="ACT-like_dom_sf"/>
</dbReference>
<dbReference type="InterPro" id="IPR041701">
    <property type="entry name" value="MetN_ABC"/>
</dbReference>
<dbReference type="InterPro" id="IPR050086">
    <property type="entry name" value="MetN_ABC_transporter-like"/>
</dbReference>
<dbReference type="InterPro" id="IPR018449">
    <property type="entry name" value="NIL_domain"/>
</dbReference>
<dbReference type="InterPro" id="IPR027417">
    <property type="entry name" value="P-loop_NTPase"/>
</dbReference>
<dbReference type="PANTHER" id="PTHR43166">
    <property type="entry name" value="AMINO ACID IMPORT ATP-BINDING PROTEIN"/>
    <property type="match status" value="1"/>
</dbReference>
<dbReference type="PANTHER" id="PTHR43166:SF30">
    <property type="entry name" value="METHIONINE IMPORT ATP-BINDING PROTEIN METN"/>
    <property type="match status" value="1"/>
</dbReference>
<dbReference type="Pfam" id="PF00005">
    <property type="entry name" value="ABC_tran"/>
    <property type="match status" value="1"/>
</dbReference>
<dbReference type="Pfam" id="PF09383">
    <property type="entry name" value="NIL"/>
    <property type="match status" value="1"/>
</dbReference>
<dbReference type="SMART" id="SM00382">
    <property type="entry name" value="AAA"/>
    <property type="match status" value="1"/>
</dbReference>
<dbReference type="SMART" id="SM00930">
    <property type="entry name" value="NIL"/>
    <property type="match status" value="1"/>
</dbReference>
<dbReference type="SUPFAM" id="SSF55021">
    <property type="entry name" value="ACT-like"/>
    <property type="match status" value="1"/>
</dbReference>
<dbReference type="SUPFAM" id="SSF52540">
    <property type="entry name" value="P-loop containing nucleoside triphosphate hydrolases"/>
    <property type="match status" value="1"/>
</dbReference>
<dbReference type="PROSITE" id="PS00211">
    <property type="entry name" value="ABC_TRANSPORTER_1"/>
    <property type="match status" value="1"/>
</dbReference>
<dbReference type="PROSITE" id="PS50893">
    <property type="entry name" value="ABC_TRANSPORTER_2"/>
    <property type="match status" value="1"/>
</dbReference>
<dbReference type="PROSITE" id="PS51264">
    <property type="entry name" value="METN"/>
    <property type="match status" value="1"/>
</dbReference>
<name>METN2_PSEAE</name>
<proteinExistence type="inferred from homology"/>
<sequence>MIEFHDVHKTYRVAGREIPALQPTRLNIQAGQIFGLIGHSGAGKSTLLRLINRLEEPSGGRILVEGEDVTALDAEGLRRFRQRVGMIFQHFNLLSSKTVADNIAMPLRLAGGFSRAEVDARVSELLARVGLSDHARKYPAQLSGGQKQRVGIARALACRPSILLCDEATSALDPQTTASVLQLLAEINRELKLTIVLITHEMDVIRRVCDQVAVMDGGAIVEQGDVADVFLHPQHPTTRRFVFEAERVDEDERHDDFAHVPGLILRLTFRGEATYAPLLGTVARQTGVDYSILSGRIDRIKDTPYGQLTLALVGGDLEAAMSQLNAADVHVEVLR</sequence>